<name>PSBP_PINST</name>
<dbReference type="GO" id="GO:0009535">
    <property type="term" value="C:chloroplast thylakoid membrane"/>
    <property type="evidence" value="ECO:0007669"/>
    <property type="project" value="UniProtKB-SubCell"/>
</dbReference>
<dbReference type="GO" id="GO:0009523">
    <property type="term" value="C:photosystem II"/>
    <property type="evidence" value="ECO:0007669"/>
    <property type="project" value="UniProtKB-KW"/>
</dbReference>
<dbReference type="GO" id="GO:0015979">
    <property type="term" value="P:photosynthesis"/>
    <property type="evidence" value="ECO:0007669"/>
    <property type="project" value="UniProtKB-KW"/>
</dbReference>
<feature type="chain" id="PRO_0000240624" description="Putative oxygen-evolving enhancer protein 2">
    <location>
        <begin position="1" status="less than"/>
        <end position="11" status="greater than"/>
    </location>
</feature>
<feature type="non-terminal residue" evidence="4">
    <location>
        <position position="1"/>
    </location>
</feature>
<feature type="non-terminal residue" evidence="4">
    <location>
        <position position="11"/>
    </location>
</feature>
<organism>
    <name type="scientific">Pinus strobus</name>
    <name type="common">Eastern white pine</name>
    <dbReference type="NCBI Taxonomy" id="3348"/>
    <lineage>
        <taxon>Eukaryota</taxon>
        <taxon>Viridiplantae</taxon>
        <taxon>Streptophyta</taxon>
        <taxon>Embryophyta</taxon>
        <taxon>Tracheophyta</taxon>
        <taxon>Spermatophyta</taxon>
        <taxon>Pinopsida</taxon>
        <taxon>Pinidae</taxon>
        <taxon>Conifers I</taxon>
        <taxon>Pinales</taxon>
        <taxon>Pinaceae</taxon>
        <taxon>Pinus</taxon>
        <taxon>Pinus subgen. Strobus</taxon>
    </lineage>
</organism>
<comment type="function">
    <text evidence="2">May be involved in the regulation of photosystem II.</text>
</comment>
<comment type="subcellular location">
    <subcellularLocation>
        <location>Plastid</location>
        <location>Chloroplast thylakoid membrane</location>
    </subcellularLocation>
    <text evidence="1">Associated with the photosystem II complex.</text>
</comment>
<comment type="miscellaneous">
    <text evidence="3">On the 2D-gel the determined pI of this protein is: 7.1, its MW is: 22.1 kDa.</text>
</comment>
<comment type="similarity">
    <text evidence="5">Belongs to the PsbP family.</text>
</comment>
<proteinExistence type="evidence at protein level"/>
<accession>P84727</accession>
<evidence type="ECO:0000250" key="1"/>
<evidence type="ECO:0000250" key="2">
    <source>
        <dbReference type="UniProtKB" id="P12302"/>
    </source>
</evidence>
<evidence type="ECO:0000269" key="3">
    <source>
    </source>
</evidence>
<evidence type="ECO:0000303" key="4">
    <source>
    </source>
</evidence>
<evidence type="ECO:0000305" key="5"/>
<sequence>GEAANVMGAPK</sequence>
<protein>
    <recommendedName>
        <fullName>Putative oxygen-evolving enhancer protein 2</fullName>
        <shortName>OEE2</shortName>
    </recommendedName>
    <alternativeName>
        <fullName>23 kDa subunit of oxygen evolving system of photosystem II</fullName>
    </alternativeName>
    <alternativeName>
        <fullName>23 kDa thylakoid membrane protein</fullName>
    </alternativeName>
    <alternativeName>
        <fullName>OEC 23 kDa subunit</fullName>
    </alternativeName>
    <alternativeName>
        <fullName>PS11</fullName>
    </alternativeName>
</protein>
<gene>
    <name evidence="2" type="primary">PSBP</name>
</gene>
<keyword id="KW-0150">Chloroplast</keyword>
<keyword id="KW-0903">Direct protein sequencing</keyword>
<keyword id="KW-0472">Membrane</keyword>
<keyword id="KW-0602">Photosynthesis</keyword>
<keyword id="KW-0604">Photosystem II</keyword>
<keyword id="KW-0934">Plastid</keyword>
<keyword id="KW-0793">Thylakoid</keyword>
<reference evidence="5" key="1">
    <citation type="journal article" date="2006" name="Mol. Plant Microbe Interact.">
        <title>Proteomic comparison of needles from blister rust-resistant and susceptible Pinus strobus seedlings reveals upregulation of putative disease resistance proteins.</title>
        <authorList>
            <person name="Smith J.A."/>
            <person name="Blanchette R.A."/>
            <person name="Burnes T.A."/>
            <person name="Jacobs J.J."/>
            <person name="Higgins L."/>
            <person name="Witthuhn B.A."/>
            <person name="David A.J."/>
            <person name="Gillman J.H."/>
        </authorList>
    </citation>
    <scope>PROTEIN SEQUENCE</scope>
    <source>
        <tissue evidence="3">Leaf</tissue>
    </source>
</reference>